<organism>
    <name type="scientific">Streptococcus mutans serotype c (strain ATCC 700610 / UA159)</name>
    <dbReference type="NCBI Taxonomy" id="210007"/>
    <lineage>
        <taxon>Bacteria</taxon>
        <taxon>Bacillati</taxon>
        <taxon>Bacillota</taxon>
        <taxon>Bacilli</taxon>
        <taxon>Lactobacillales</taxon>
        <taxon>Streptococcaceae</taxon>
        <taxon>Streptococcus</taxon>
    </lineage>
</organism>
<gene>
    <name evidence="1" type="primary">argB</name>
    <name type="ordered locus">SMU_665</name>
</gene>
<reference key="1">
    <citation type="journal article" date="2002" name="Proc. Natl. Acad. Sci. U.S.A.">
        <title>Genome sequence of Streptococcus mutans UA159, a cariogenic dental pathogen.</title>
        <authorList>
            <person name="Ajdic D.J."/>
            <person name="McShan W.M."/>
            <person name="McLaughlin R.E."/>
            <person name="Savic G."/>
            <person name="Chang J."/>
            <person name="Carson M.B."/>
            <person name="Primeaux C."/>
            <person name="Tian R."/>
            <person name="Kenton S."/>
            <person name="Jia H.G."/>
            <person name="Lin S.P."/>
            <person name="Qian Y."/>
            <person name="Li S."/>
            <person name="Zhu H."/>
            <person name="Najar F.Z."/>
            <person name="Lai H."/>
            <person name="White J."/>
            <person name="Roe B.A."/>
            <person name="Ferretti J.J."/>
        </authorList>
    </citation>
    <scope>NUCLEOTIDE SEQUENCE [LARGE SCALE GENOMIC DNA]</scope>
    <source>
        <strain>ATCC 700610 / UA159</strain>
    </source>
</reference>
<keyword id="KW-0002">3D-structure</keyword>
<keyword id="KW-0028">Amino-acid biosynthesis</keyword>
<keyword id="KW-0055">Arginine biosynthesis</keyword>
<keyword id="KW-0067">ATP-binding</keyword>
<keyword id="KW-0963">Cytoplasm</keyword>
<keyword id="KW-0418">Kinase</keyword>
<keyword id="KW-0547">Nucleotide-binding</keyword>
<keyword id="KW-1185">Reference proteome</keyword>
<keyword id="KW-0808">Transferase</keyword>
<comment type="function">
    <text evidence="1">Catalyzes the ATP-dependent phosphorylation of N-acetyl-L-glutamate.</text>
</comment>
<comment type="catalytic activity">
    <reaction evidence="1">
        <text>N-acetyl-L-glutamate + ATP = N-acetyl-L-glutamyl 5-phosphate + ADP</text>
        <dbReference type="Rhea" id="RHEA:14629"/>
        <dbReference type="ChEBI" id="CHEBI:30616"/>
        <dbReference type="ChEBI" id="CHEBI:44337"/>
        <dbReference type="ChEBI" id="CHEBI:57936"/>
        <dbReference type="ChEBI" id="CHEBI:456216"/>
        <dbReference type="EC" id="2.7.2.8"/>
    </reaction>
</comment>
<comment type="pathway">
    <text evidence="1">Amino-acid biosynthesis; L-arginine biosynthesis; N(2)-acetyl-L-ornithine from L-glutamate: step 2/4.</text>
</comment>
<comment type="subcellular location">
    <subcellularLocation>
        <location evidence="1">Cytoplasm</location>
    </subcellularLocation>
</comment>
<comment type="similarity">
    <text evidence="1">Belongs to the acetylglutamate kinase family. ArgB subfamily.</text>
</comment>
<accession>Q8DV44</accession>
<sequence>MKDIIVIKIGGVASQQLSGDFLSQIKNWQDAGKQLVIVHGGGFAINKLMEENQVPVKKINGLRVTSKDDMVLVSHALLDLVGKNLQEKLRQAGVSCQQLKSDIKHVVAADYLDKDTYGYVGDVTHINKRVIEEFLENRQIPILASLGYSKEGDMLNINADYLATAVAVALAADKLILMTNVKGVLENGAVLEKITSHQVQEKIDTAVITAGMIPKIESAAKTVAAGVGQVLIGDNLLTGTLITAD</sequence>
<proteinExistence type="evidence at protein level"/>
<name>ARGB_STRMU</name>
<protein>
    <recommendedName>
        <fullName evidence="1">Acetylglutamate kinase</fullName>
        <ecNumber evidence="1">2.7.2.8</ecNumber>
    </recommendedName>
    <alternativeName>
        <fullName evidence="1">N-acetyl-L-glutamate 5-phosphotransferase</fullName>
    </alternativeName>
    <alternativeName>
        <fullName evidence="1">NAG kinase</fullName>
        <shortName evidence="1">NAGK</shortName>
    </alternativeName>
</protein>
<feature type="chain" id="PRO_0000112673" description="Acetylglutamate kinase">
    <location>
        <begin position="1"/>
        <end position="245"/>
    </location>
</feature>
<feature type="binding site" evidence="1">
    <location>
        <begin position="41"/>
        <end position="42"/>
    </location>
    <ligand>
        <name>substrate</name>
    </ligand>
</feature>
<feature type="binding site" evidence="1">
    <location>
        <position position="63"/>
    </location>
    <ligand>
        <name>substrate</name>
    </ligand>
</feature>
<feature type="binding site" evidence="1">
    <location>
        <position position="156"/>
    </location>
    <ligand>
        <name>substrate</name>
    </ligand>
</feature>
<feature type="site" description="Transition state stabilizer" evidence="1">
    <location>
        <position position="8"/>
    </location>
</feature>
<feature type="site" description="Transition state stabilizer" evidence="1">
    <location>
        <position position="215"/>
    </location>
</feature>
<feature type="strand" evidence="2">
    <location>
        <begin position="4"/>
        <end position="9"/>
    </location>
</feature>
<feature type="helix" evidence="2">
    <location>
        <begin position="13"/>
        <end position="15"/>
    </location>
</feature>
<feature type="helix" evidence="2">
    <location>
        <begin position="19"/>
        <end position="30"/>
    </location>
</feature>
<feature type="strand" evidence="2">
    <location>
        <begin position="34"/>
        <end position="39"/>
    </location>
</feature>
<feature type="helix" evidence="2">
    <location>
        <begin position="42"/>
        <end position="51"/>
    </location>
</feature>
<feature type="helix" evidence="2">
    <location>
        <begin position="67"/>
        <end position="79"/>
    </location>
</feature>
<feature type="helix" evidence="2">
    <location>
        <begin position="82"/>
        <end position="91"/>
    </location>
</feature>
<feature type="strand" evidence="2">
    <location>
        <begin position="96"/>
        <end position="98"/>
    </location>
</feature>
<feature type="helix" evidence="2">
    <location>
        <begin position="101"/>
        <end position="105"/>
    </location>
</feature>
<feature type="strand" evidence="2">
    <location>
        <begin position="107"/>
        <end position="112"/>
    </location>
</feature>
<feature type="helix" evidence="2">
    <location>
        <begin position="114"/>
        <end position="117"/>
    </location>
</feature>
<feature type="strand" evidence="2">
    <location>
        <begin position="118"/>
        <end position="126"/>
    </location>
</feature>
<feature type="helix" evidence="2">
    <location>
        <begin position="128"/>
        <end position="136"/>
    </location>
</feature>
<feature type="strand" evidence="2">
    <location>
        <begin position="140"/>
        <end position="148"/>
    </location>
</feature>
<feature type="strand" evidence="2">
    <location>
        <begin position="154"/>
        <end position="156"/>
    </location>
</feature>
<feature type="helix" evidence="2">
    <location>
        <begin position="159"/>
        <end position="169"/>
    </location>
</feature>
<feature type="strand" evidence="2">
    <location>
        <begin position="173"/>
        <end position="178"/>
    </location>
</feature>
<feature type="strand" evidence="2">
    <location>
        <begin position="180"/>
        <end position="183"/>
    </location>
</feature>
<feature type="strand" evidence="2">
    <location>
        <begin position="193"/>
        <end position="195"/>
    </location>
</feature>
<feature type="helix" evidence="2">
    <location>
        <begin position="196"/>
        <end position="198"/>
    </location>
</feature>
<feature type="helix" evidence="2">
    <location>
        <begin position="200"/>
        <end position="204"/>
    </location>
</feature>
<feature type="helix" evidence="2">
    <location>
        <begin position="212"/>
        <end position="224"/>
    </location>
</feature>
<feature type="strand" evidence="2">
    <location>
        <begin position="228"/>
        <end position="237"/>
    </location>
</feature>
<feature type="strand" evidence="2">
    <location>
        <begin position="239"/>
        <end position="243"/>
    </location>
</feature>
<evidence type="ECO:0000255" key="1">
    <source>
        <dbReference type="HAMAP-Rule" id="MF_00082"/>
    </source>
</evidence>
<evidence type="ECO:0007829" key="2">
    <source>
        <dbReference type="PDB" id="3L86"/>
    </source>
</evidence>
<dbReference type="EC" id="2.7.2.8" evidence="1"/>
<dbReference type="EMBL" id="AE014133">
    <property type="protein sequence ID" value="AAN58399.1"/>
    <property type="molecule type" value="Genomic_DNA"/>
</dbReference>
<dbReference type="RefSeq" id="NP_721093.1">
    <property type="nucleotide sequence ID" value="NC_004350.2"/>
</dbReference>
<dbReference type="RefSeq" id="WP_002261876.1">
    <property type="nucleotide sequence ID" value="NC_004350.2"/>
</dbReference>
<dbReference type="PDB" id="3L86">
    <property type="method" value="X-ray"/>
    <property type="resolution" value="2.06 A"/>
    <property type="chains" value="A=1-245"/>
</dbReference>
<dbReference type="PDBsum" id="3L86"/>
<dbReference type="SMR" id="Q8DV44"/>
<dbReference type="STRING" id="210007.SMU_665"/>
<dbReference type="KEGG" id="smu:SMU_665"/>
<dbReference type="PATRIC" id="fig|210007.7.peg.590"/>
<dbReference type="eggNOG" id="COG0548">
    <property type="taxonomic scope" value="Bacteria"/>
</dbReference>
<dbReference type="HOGENOM" id="CLU_053680_1_0_9"/>
<dbReference type="OrthoDB" id="9803155at2"/>
<dbReference type="PhylomeDB" id="Q8DV44"/>
<dbReference type="UniPathway" id="UPA00068">
    <property type="reaction ID" value="UER00107"/>
</dbReference>
<dbReference type="Proteomes" id="UP000002512">
    <property type="component" value="Chromosome"/>
</dbReference>
<dbReference type="GO" id="GO:0005737">
    <property type="term" value="C:cytoplasm"/>
    <property type="evidence" value="ECO:0007669"/>
    <property type="project" value="UniProtKB-SubCell"/>
</dbReference>
<dbReference type="GO" id="GO:0003991">
    <property type="term" value="F:acetylglutamate kinase activity"/>
    <property type="evidence" value="ECO:0007669"/>
    <property type="project" value="UniProtKB-UniRule"/>
</dbReference>
<dbReference type="GO" id="GO:0005524">
    <property type="term" value="F:ATP binding"/>
    <property type="evidence" value="ECO:0007669"/>
    <property type="project" value="UniProtKB-UniRule"/>
</dbReference>
<dbReference type="GO" id="GO:0042450">
    <property type="term" value="P:arginine biosynthetic process via ornithine"/>
    <property type="evidence" value="ECO:0007669"/>
    <property type="project" value="UniProtKB-UniRule"/>
</dbReference>
<dbReference type="GO" id="GO:0006526">
    <property type="term" value="P:L-arginine biosynthetic process"/>
    <property type="evidence" value="ECO:0007669"/>
    <property type="project" value="UniProtKB-UniPathway"/>
</dbReference>
<dbReference type="CDD" id="cd04238">
    <property type="entry name" value="AAK_NAGK-like"/>
    <property type="match status" value="1"/>
</dbReference>
<dbReference type="Gene3D" id="3.40.1160.10">
    <property type="entry name" value="Acetylglutamate kinase-like"/>
    <property type="match status" value="1"/>
</dbReference>
<dbReference type="HAMAP" id="MF_00082">
    <property type="entry name" value="ArgB"/>
    <property type="match status" value="1"/>
</dbReference>
<dbReference type="InterPro" id="IPR036393">
    <property type="entry name" value="AceGlu_kinase-like_sf"/>
</dbReference>
<dbReference type="InterPro" id="IPR004662">
    <property type="entry name" value="AcgluKinase_fam"/>
</dbReference>
<dbReference type="InterPro" id="IPR037528">
    <property type="entry name" value="ArgB"/>
</dbReference>
<dbReference type="InterPro" id="IPR001048">
    <property type="entry name" value="Asp/Glu/Uridylate_kinase"/>
</dbReference>
<dbReference type="InterPro" id="IPR001057">
    <property type="entry name" value="Glu/AcGlu_kinase"/>
</dbReference>
<dbReference type="NCBIfam" id="TIGR00761">
    <property type="entry name" value="argB"/>
    <property type="match status" value="1"/>
</dbReference>
<dbReference type="PANTHER" id="PTHR23342">
    <property type="entry name" value="N-ACETYLGLUTAMATE SYNTHASE"/>
    <property type="match status" value="1"/>
</dbReference>
<dbReference type="PANTHER" id="PTHR23342:SF0">
    <property type="entry name" value="N-ACETYLGLUTAMATE SYNTHASE, MITOCHONDRIAL"/>
    <property type="match status" value="1"/>
</dbReference>
<dbReference type="Pfam" id="PF00696">
    <property type="entry name" value="AA_kinase"/>
    <property type="match status" value="1"/>
</dbReference>
<dbReference type="PIRSF" id="PIRSF000728">
    <property type="entry name" value="NAGK"/>
    <property type="match status" value="1"/>
</dbReference>
<dbReference type="PRINTS" id="PR00474">
    <property type="entry name" value="GLU5KINASE"/>
</dbReference>
<dbReference type="SUPFAM" id="SSF53633">
    <property type="entry name" value="Carbamate kinase-like"/>
    <property type="match status" value="1"/>
</dbReference>